<reference key="1">
    <citation type="submission" date="2002-01" db="EMBL/GenBank/DDBJ databases">
        <title>Gsa14 is a membrane protein required for pexophagy and autophagy in Pichia pastoris.</title>
        <authorList>
            <person name="Chang T."/>
            <person name="Thomson J.M."/>
            <person name="Dunn W.A. Jr."/>
        </authorList>
    </citation>
    <scope>NUCLEOTIDE SEQUENCE [GENOMIC DNA]</scope>
</reference>
<reference key="2">
    <citation type="journal article" date="2001" name="J. Biol. Chem.">
        <title>GSA11 encodes a unique 208-kDa protein required for pexophagy and autophagy in Pichia pastoris.</title>
        <authorList>
            <person name="Stromhaug P.E."/>
            <person name="Bevan A."/>
            <person name="Dunn W.A. Jr."/>
        </authorList>
    </citation>
    <scope>FUNCTION</scope>
</reference>
<reference key="3">
    <citation type="journal article" date="2003" name="Dev. Cell">
        <title>A unified nomenclature for yeast autophagy-related genes.</title>
        <authorList>
            <person name="Klionsky D.J."/>
            <person name="Cregg J.M."/>
            <person name="Dunn W.A. Jr."/>
            <person name="Emr S.D."/>
            <person name="Sakai Y."/>
            <person name="Sandoval I.V."/>
            <person name="Sibirny A."/>
            <person name="Subramani S."/>
            <person name="Thumm M."/>
            <person name="Veenhuis M."/>
            <person name="Ohsumi Y."/>
        </authorList>
    </citation>
    <scope>NOMENCLATURE</scope>
</reference>
<reference key="4">
    <citation type="journal article" date="2005" name="Autophagy">
        <title>Atg9 cycles between mitochondria and the pre-autophagosomal structure in yeasts.</title>
        <authorList>
            <person name="Reggiori F."/>
            <person name="Shintani T."/>
            <person name="Nair U."/>
            <person name="Klionsky D.J."/>
        </authorList>
    </citation>
    <scope>SUBCELLULAR LOCATION</scope>
</reference>
<reference key="5">
    <citation type="journal article" date="2005" name="Mol. Biol. Cell">
        <title>PpATG9 encodes a novel membrane protein that traffics to vacuolar membranes, which sequester peroxisomes during pexophagy in Pichia pastoris.</title>
        <authorList>
            <person name="Chang T."/>
            <person name="Schroder L.A."/>
            <person name="Thomson J.M."/>
            <person name="Klocman A.S."/>
            <person name="Tomasini A.J."/>
            <person name="Stromhaug P.E."/>
            <person name="Dunn W.A. Jr."/>
        </authorList>
    </citation>
    <scope>FUNCTION</scope>
    <scope>SUBCELLULAR LOCATION</scope>
    <scope>TRAFFICKING</scope>
</reference>
<protein>
    <recommendedName>
        <fullName>Autophagy-related protein 9</fullName>
    </recommendedName>
    <alternativeName>
        <fullName>Glucose-induced selective autophagy protein 14</fullName>
    </alternativeName>
</protein>
<sequence>MHKNNTTFLSRVFGINSRNIDVHNPLFADDSVIPLYDQNQSAYYDNAYSDYSSDEEDSKPRTSRQTDSNLHMTDHSGDGNDPFNQMDNSSRFSNSSSFHYNNTDQEDDNPELLLLQDEDSSLNRKNLDNSDFQSFAKKTFNQIPKIKFQLPKKEDYPTSHRQPPDIENQNGTLKSSVKKQIHFLDPMDKALWMWSNVSNLDTFLHQVYDYYTGNGFNCIMMNKFTELFTVVFIVWLFSFMGNCIDYDKLMNDRNVYQFSQVKIDKCYSKIGFFPQKLIYWLFFIGLCLKLYQIFLDYLVLKDMKLFFNLLLGLSDDELQTISWGLVVKRIMILRDKNINAIVSQNTDLTSRKRMNAHDIANRILRKENYMIAMYNKSILDLDIELPLIGKVQLLTNTLQWNLNIAILDYFFDSETGQINLPALKERNRHTISTELKKRLIFCGIINIVLAPILSIYFIMYYFLKFFYDFKTNPADISSREYSPYARWKLREFNELPHIFNRRLNISTESSNKYINQFPKETTTALLKFIMFISGSIVGVLVIVTILDPEFFLNFELTPGRTVLFYVSTLGAIFTICKNSIPDDTLVFDPEVSLRYLSQFTHYLPQEWEGKYHTEEVKNDFCKLYTLKLYLVGKEILSWLFLPYILCYKLPECADTISDFFREFSVHVDGLGYVCTFAMFQFNNQHNENGNANVHQNGNGNGGVPSAKSKSKKVPNPNRFTTKPSMRDMENDDKMIKSYMYFLESYGNDEIVQHQQALNRSLIYSTEISPTSGDDLNDSNILGLRQRNVATTGKRQNSIGNGLIYNGQNKRLSIGEAKTNVYSNPIASTVLDKDLQYKLANSYILNGMPGLNEANQPADRKNERKYSNDSPGVMKLVDKISQQHKA</sequence>
<name>ATG9_PICPA</name>
<gene>
    <name type="primary">ATG9</name>
    <name type="synonym">GSA14</name>
</gene>
<organism>
    <name type="scientific">Komagataella pastoris</name>
    <name type="common">Yeast</name>
    <name type="synonym">Pichia pastoris</name>
    <dbReference type="NCBI Taxonomy" id="4922"/>
    <lineage>
        <taxon>Eukaryota</taxon>
        <taxon>Fungi</taxon>
        <taxon>Dikarya</taxon>
        <taxon>Ascomycota</taxon>
        <taxon>Saccharomycotina</taxon>
        <taxon>Pichiomycetes</taxon>
        <taxon>Pichiales</taxon>
        <taxon>Pichiaceae</taxon>
        <taxon>Komagataella</taxon>
    </lineage>
</organism>
<comment type="function">
    <text evidence="2 5 6">Phospholipid scramblase involved in autophagy and cytoplasm to vacuole transport (Cvt) vesicle formation. Cycles between the preautophagosomal structure/phagophore assembly site (PAS) and the cytoplasmic vesicle pool and supplies membrane for the growing autophagosome. Lipid scramblase activity plays a key role in preautophagosomal structure/phagophore assembly by distributing the phospholipids that arrive through ATG2 from the cytoplasmic to the luminal leaflet of the bilayer, thereby driving autophagosomal membrane expansion. Required for mitophagy. Also involved in endoplasmic reticulum-specific autophagic process and is essential for the survival of cells subjected to severe ER stress. Different machineries are required for anterograde trafficking to the PAS during either the Cvt pathway or bulk autophagy and for retrograde trafficking (By similarity). Essential for the formation of the sequestering membranes and assembly of the micropexophagy-specific membrane apparatus (MIPA) which mediates the fusion of the sequestering membranes and incorporation of the peroxisomes into the vacuole during micropexophagy (PubMed:11533052, PubMed:16079180).</text>
</comment>
<comment type="catalytic activity">
    <reaction evidence="2">
        <text>a 1,2-diacyl-sn-glycero-3-phosphocholine(in) = a 1,2-diacyl-sn-glycero-3-phosphocholine(out)</text>
        <dbReference type="Rhea" id="RHEA:38571"/>
        <dbReference type="ChEBI" id="CHEBI:57643"/>
    </reaction>
</comment>
<comment type="catalytic activity">
    <reaction evidence="2">
        <text>a 1,2-diacyl-sn-glycero-3-phospho-L-serine(in) = a 1,2-diacyl-sn-glycero-3-phospho-L-serine(out)</text>
        <dbReference type="Rhea" id="RHEA:38663"/>
        <dbReference type="ChEBI" id="CHEBI:57262"/>
    </reaction>
</comment>
<comment type="catalytic activity">
    <reaction evidence="2">
        <text>a 1,2-diacyl-sn-glycero-3-phosphoethanolamine(in) = a 1,2-diacyl-sn-glycero-3-phosphoethanolamine(out)</text>
        <dbReference type="Rhea" id="RHEA:38895"/>
        <dbReference type="ChEBI" id="CHEBI:64612"/>
    </reaction>
</comment>
<comment type="catalytic activity">
    <reaction evidence="2">
        <text>a 1,2-diacyl-sn-glycero-3-phospho-(1D-myo-inositol-3-phosphate)(in) = a 1,2-diacyl-sn-glycero-3-phospho-(1D-myo-inositol-3-phosphate)(out)</text>
        <dbReference type="Rhea" id="RHEA:67920"/>
        <dbReference type="ChEBI" id="CHEBI:58088"/>
    </reaction>
</comment>
<comment type="subunit">
    <text evidence="1">Homotrimer; forms a homotrimer with a central pore that forms a path between the two membrane leaflets.</text>
</comment>
<comment type="subcellular location">
    <subcellularLocation>
        <location evidence="6">Preautophagosomal structure membrane</location>
        <topology evidence="7">Multi-pass membrane protein</topology>
    </subcellularLocation>
    <subcellularLocation>
        <location evidence="6">Cytoplasmic vesicle membrane</location>
        <topology evidence="7">Multi-pass membrane protein</topology>
    </subcellularLocation>
    <subcellularLocation>
        <location evidence="6">Vacuole membrane</location>
        <topology evidence="7">Multi-pass membrane protein</topology>
    </subcellularLocation>
    <subcellularLocation>
        <location evidence="2">Golgi apparatus membrane</location>
        <topology evidence="2">Multi-pass membrane protein</topology>
    </subcellularLocation>
    <subcellularLocation>
        <location evidence="2">Endoplasmic reticulum membrane</location>
        <topology evidence="2">Multi-pass membrane protein</topology>
    </subcellularLocation>
    <text evidence="6">The peripheral pool of ATG9 partially colocalizes with mitochondria and it has been speculated that ATG9 resides either in the mitochondria or within vesicles in very close to the mitochondria. During methanol growth, localizes to multiple structures situated near the plasma membrane referred as the peripheral compartment (Atg9-PC). During glucose-induced micropexophagy, traffics from the Atg9-PC to unique perivacuolar structures (PVS) that contain ATG11, but lack ATG2 and ATG8.</text>
</comment>
<comment type="domain">
    <text evidence="1">Forms a homotrimer with a solvated central pore, which is connected laterally to the cytosol through the cavity within each protomer. Acts as a lipid scramblase that uses its central pore to function: the central pore opens laterally to accommodate lipid headgroups, thereby enabling lipid flipping and redistribution of lipids added to the outer leaflet of ATG9-containing vesicles, thereby enabling growth into autophagosomes.</text>
</comment>
<comment type="PTM">
    <text evidence="2">Phosphorylated by ATG1. ATG1 phosphorylation is required for preautophagosome elongation.</text>
</comment>
<comment type="similarity">
    <text evidence="8">Belongs to the ATG9 family.</text>
</comment>
<proteinExistence type="inferred from homology"/>
<evidence type="ECO:0000250" key="1">
    <source>
        <dbReference type="UniProtKB" id="O74312"/>
    </source>
</evidence>
<evidence type="ECO:0000250" key="2">
    <source>
        <dbReference type="UniProtKB" id="Q12142"/>
    </source>
</evidence>
<evidence type="ECO:0000255" key="3"/>
<evidence type="ECO:0000256" key="4">
    <source>
        <dbReference type="SAM" id="MobiDB-lite"/>
    </source>
</evidence>
<evidence type="ECO:0000269" key="5">
    <source>
    </source>
</evidence>
<evidence type="ECO:0000269" key="6">
    <source>
    </source>
</evidence>
<evidence type="ECO:0000303" key="7">
    <source>
    </source>
</evidence>
<evidence type="ECO:0000305" key="8"/>
<feature type="chain" id="PRO_0000119835" description="Autophagy-related protein 9">
    <location>
        <begin position="1"/>
        <end position="885"/>
    </location>
</feature>
<feature type="topological domain" description="Cytoplasmic" evidence="8">
    <location>
        <begin position="1"/>
        <end position="223"/>
    </location>
</feature>
<feature type="transmembrane region" description="Helical" evidence="3">
    <location>
        <begin position="224"/>
        <end position="244"/>
    </location>
</feature>
<feature type="topological domain" description="Lumenal" evidence="8">
    <location>
        <begin position="245"/>
        <end position="279"/>
    </location>
</feature>
<feature type="transmembrane region" description="Helical" evidence="3">
    <location>
        <begin position="280"/>
        <end position="300"/>
    </location>
</feature>
<feature type="topological domain" description="Cytoplasmic" evidence="8">
    <location>
        <begin position="301"/>
        <end position="438"/>
    </location>
</feature>
<feature type="intramembrane region" evidence="1">
    <location>
        <begin position="439"/>
        <end position="459"/>
    </location>
</feature>
<feature type="topological domain" description="Cytoplasmic" evidence="8">
    <location>
        <begin position="460"/>
        <end position="524"/>
    </location>
</feature>
<feature type="transmembrane region" description="Helical" evidence="3">
    <location>
        <begin position="525"/>
        <end position="545"/>
    </location>
</feature>
<feature type="topological domain" description="Lumenal" evidence="8">
    <location>
        <begin position="546"/>
        <end position="555"/>
    </location>
</feature>
<feature type="transmembrane region" description="Helical" evidence="3">
    <location>
        <begin position="556"/>
        <end position="576"/>
    </location>
</feature>
<feature type="topological domain" description="Cytoplasmic" evidence="8">
    <location>
        <begin position="577"/>
        <end position="625"/>
    </location>
</feature>
<feature type="intramembrane region" evidence="1">
    <location>
        <begin position="626"/>
        <end position="646"/>
    </location>
</feature>
<feature type="topological domain" description="Cytoplasmic" evidence="8">
    <location>
        <begin position="647"/>
        <end position="885"/>
    </location>
</feature>
<feature type="region of interest" description="Disordered" evidence="4">
    <location>
        <begin position="49"/>
        <end position="108"/>
    </location>
</feature>
<feature type="region of interest" description="Disordered" evidence="4">
    <location>
        <begin position="688"/>
        <end position="726"/>
    </location>
</feature>
<feature type="region of interest" description="Disordered" evidence="4">
    <location>
        <begin position="847"/>
        <end position="871"/>
    </location>
</feature>
<feature type="compositionally biased region" description="Low complexity" evidence="4">
    <location>
        <begin position="88"/>
        <end position="98"/>
    </location>
</feature>
<feature type="compositionally biased region" description="Low complexity" evidence="4">
    <location>
        <begin position="688"/>
        <end position="697"/>
    </location>
</feature>
<feature type="compositionally biased region" description="Basic and acidic residues" evidence="4">
    <location>
        <begin position="857"/>
        <end position="866"/>
    </location>
</feature>
<dbReference type="EMBL" id="AY075105">
    <property type="protein sequence ID" value="AAL77196.1"/>
    <property type="molecule type" value="Genomic_DNA"/>
</dbReference>
<dbReference type="SMR" id="Q876N4"/>
<dbReference type="GO" id="GO:0005776">
    <property type="term" value="C:autophagosome"/>
    <property type="evidence" value="ECO:0007669"/>
    <property type="project" value="TreeGrafter"/>
</dbReference>
<dbReference type="GO" id="GO:0030659">
    <property type="term" value="C:cytoplasmic vesicle membrane"/>
    <property type="evidence" value="ECO:0007669"/>
    <property type="project" value="UniProtKB-SubCell"/>
</dbReference>
<dbReference type="GO" id="GO:0005789">
    <property type="term" value="C:endoplasmic reticulum membrane"/>
    <property type="evidence" value="ECO:0007669"/>
    <property type="project" value="UniProtKB-SubCell"/>
</dbReference>
<dbReference type="GO" id="GO:0000139">
    <property type="term" value="C:Golgi membrane"/>
    <property type="evidence" value="ECO:0007669"/>
    <property type="project" value="UniProtKB-SubCell"/>
</dbReference>
<dbReference type="GO" id="GO:0034045">
    <property type="term" value="C:phagophore assembly site membrane"/>
    <property type="evidence" value="ECO:0007669"/>
    <property type="project" value="UniProtKB-SubCell"/>
</dbReference>
<dbReference type="GO" id="GO:0005774">
    <property type="term" value="C:vacuolar membrane"/>
    <property type="evidence" value="ECO:0007669"/>
    <property type="project" value="UniProtKB-SubCell"/>
</dbReference>
<dbReference type="GO" id="GO:0000422">
    <property type="term" value="P:autophagy of mitochondrion"/>
    <property type="evidence" value="ECO:0007669"/>
    <property type="project" value="TreeGrafter"/>
</dbReference>
<dbReference type="GO" id="GO:0006869">
    <property type="term" value="P:lipid transport"/>
    <property type="evidence" value="ECO:0007669"/>
    <property type="project" value="UniProtKB-KW"/>
</dbReference>
<dbReference type="GO" id="GO:0034727">
    <property type="term" value="P:piecemeal microautophagy of the nucleus"/>
    <property type="evidence" value="ECO:0007669"/>
    <property type="project" value="TreeGrafter"/>
</dbReference>
<dbReference type="GO" id="GO:0034497">
    <property type="term" value="P:protein localization to phagophore assembly site"/>
    <property type="evidence" value="ECO:0007669"/>
    <property type="project" value="TreeGrafter"/>
</dbReference>
<dbReference type="GO" id="GO:0061709">
    <property type="term" value="P:reticulophagy"/>
    <property type="evidence" value="ECO:0007669"/>
    <property type="project" value="TreeGrafter"/>
</dbReference>
<dbReference type="InterPro" id="IPR007241">
    <property type="entry name" value="Autophagy-rel_prot_9"/>
</dbReference>
<dbReference type="PANTHER" id="PTHR13038">
    <property type="entry name" value="APG9 AUTOPHAGY 9"/>
    <property type="match status" value="1"/>
</dbReference>
<dbReference type="PANTHER" id="PTHR13038:SF10">
    <property type="entry name" value="AUTOPHAGY-RELATED PROTEIN 9"/>
    <property type="match status" value="1"/>
</dbReference>
<dbReference type="Pfam" id="PF04109">
    <property type="entry name" value="ATG9"/>
    <property type="match status" value="1"/>
</dbReference>
<keyword id="KW-0072">Autophagy</keyword>
<keyword id="KW-0968">Cytoplasmic vesicle</keyword>
<keyword id="KW-0256">Endoplasmic reticulum</keyword>
<keyword id="KW-0333">Golgi apparatus</keyword>
<keyword id="KW-0445">Lipid transport</keyword>
<keyword id="KW-0472">Membrane</keyword>
<keyword id="KW-0597">Phosphoprotein</keyword>
<keyword id="KW-0812">Transmembrane</keyword>
<keyword id="KW-1133">Transmembrane helix</keyword>
<keyword id="KW-0813">Transport</keyword>
<keyword id="KW-0926">Vacuole</keyword>
<accession>Q876N4</accession>